<keyword id="KW-1003">Cell membrane</keyword>
<keyword id="KW-0342">GTP-binding</keyword>
<keyword id="KW-0378">Hydrolase</keyword>
<keyword id="KW-0472">Membrane</keyword>
<keyword id="KW-0547">Nucleotide-binding</keyword>
<keyword id="KW-0648">Protein biosynthesis</keyword>
<keyword id="KW-1185">Reference proteome</keyword>
<organism>
    <name type="scientific">Streptococcus gordonii (strain Challis / ATCC 35105 / BCRC 15272 / CH1 / DL1 / V288)</name>
    <dbReference type="NCBI Taxonomy" id="467705"/>
    <lineage>
        <taxon>Bacteria</taxon>
        <taxon>Bacillati</taxon>
        <taxon>Bacillota</taxon>
        <taxon>Bacilli</taxon>
        <taxon>Lactobacillales</taxon>
        <taxon>Streptococcaceae</taxon>
        <taxon>Streptococcus</taxon>
    </lineage>
</organism>
<comment type="function">
    <text evidence="1">Required for accurate and efficient protein synthesis under certain stress conditions. May act as a fidelity factor of the translation reaction, by catalyzing a one-codon backward translocation of tRNAs on improperly translocated ribosomes. Back-translocation proceeds from a post-translocation (POST) complex to a pre-translocation (PRE) complex, thus giving elongation factor G a second chance to translocate the tRNAs correctly. Binds to ribosomes in a GTP-dependent manner.</text>
</comment>
<comment type="catalytic activity">
    <reaction evidence="1">
        <text>GTP + H2O = GDP + phosphate + H(+)</text>
        <dbReference type="Rhea" id="RHEA:19669"/>
        <dbReference type="ChEBI" id="CHEBI:15377"/>
        <dbReference type="ChEBI" id="CHEBI:15378"/>
        <dbReference type="ChEBI" id="CHEBI:37565"/>
        <dbReference type="ChEBI" id="CHEBI:43474"/>
        <dbReference type="ChEBI" id="CHEBI:58189"/>
        <dbReference type="EC" id="3.6.5.n1"/>
    </reaction>
</comment>
<comment type="subcellular location">
    <subcellularLocation>
        <location evidence="1">Cell membrane</location>
        <topology evidence="1">Peripheral membrane protein</topology>
        <orientation evidence="1">Cytoplasmic side</orientation>
    </subcellularLocation>
</comment>
<comment type="similarity">
    <text evidence="1">Belongs to the TRAFAC class translation factor GTPase superfamily. Classic translation factor GTPase family. LepA subfamily.</text>
</comment>
<protein>
    <recommendedName>
        <fullName evidence="1">Elongation factor 4</fullName>
        <shortName evidence="1">EF-4</shortName>
        <ecNumber evidence="1">3.6.5.n1</ecNumber>
    </recommendedName>
    <alternativeName>
        <fullName evidence="1">Ribosomal back-translocase LepA</fullName>
    </alternativeName>
</protein>
<proteinExistence type="inferred from homology"/>
<accession>A8AWG3</accession>
<name>LEPA_STRGC</name>
<feature type="chain" id="PRO_1000075154" description="Elongation factor 4">
    <location>
        <begin position="1"/>
        <end position="607"/>
    </location>
</feature>
<feature type="domain" description="tr-type G">
    <location>
        <begin position="11"/>
        <end position="193"/>
    </location>
</feature>
<feature type="binding site" evidence="1">
    <location>
        <begin position="23"/>
        <end position="28"/>
    </location>
    <ligand>
        <name>GTP</name>
        <dbReference type="ChEBI" id="CHEBI:37565"/>
    </ligand>
</feature>
<feature type="binding site" evidence="1">
    <location>
        <begin position="140"/>
        <end position="143"/>
    </location>
    <ligand>
        <name>GTP</name>
        <dbReference type="ChEBI" id="CHEBI:37565"/>
    </ligand>
</feature>
<evidence type="ECO:0000255" key="1">
    <source>
        <dbReference type="HAMAP-Rule" id="MF_00071"/>
    </source>
</evidence>
<sequence length="607" mass="67566">MNLEDLKKRQEKIRNFSIIAHIDHGKSTLADRILEATETVSSREMQAQLLDSMDLERERGITIKLNAIELNYTAKDGETYIFHLIDTPGHVDFTYEVSRSLAACEGAILVVDAAQGIEAQTLANVYLALDNDLEILPVINKIDLPAADPERVRAEIEDVIGLDASEAVLASAKAGIGIEDILEQIVEKVPAPTGNVEAPLKALIFDSVYDAYRGVILQVRVMDGVVKPGDTIQLMSNGKTFDVTEVGIFTPKAIGRDFLATGDVGYIAASIKTVQDTRVGDTVTLADNPATEPLHGYKQMNPMVFAGLYPIESNKYNDLREALEKLQLNDASLQFEPETSQALGFGFRCGFLGLLHMDVIQERLEREFNIDLIMTAPSVIYKVNLTDGEAIDVSNPSEFPDPTKIDSIEEPYVKAQIMVPQEFVGAVMELAQRKRGDFVTMDYIDDNRVNVIYQIPLAEIVFDFFDKLKSSTRGYASFDYEISEYRSSKLVKMDILLNGDKVDALSFIVHKEFAYERGKLIVDKLKKIIPRQQFEVPIQAAIGQKIVARTDIKALRKNVLAKCYGGDVSRKRKLLEKQKAGKKRMKAIGSVEVPQEAFLSVLSMDEE</sequence>
<dbReference type="EC" id="3.6.5.n1" evidence="1"/>
<dbReference type="EMBL" id="CP000725">
    <property type="protein sequence ID" value="ABV11044.1"/>
    <property type="molecule type" value="Genomic_DNA"/>
</dbReference>
<dbReference type="RefSeq" id="WP_012000280.1">
    <property type="nucleotide sequence ID" value="NC_009785.1"/>
</dbReference>
<dbReference type="SMR" id="A8AWG3"/>
<dbReference type="STRING" id="467705.SGO_0824"/>
<dbReference type="KEGG" id="sgo:SGO_0824"/>
<dbReference type="eggNOG" id="COG0481">
    <property type="taxonomic scope" value="Bacteria"/>
</dbReference>
<dbReference type="HOGENOM" id="CLU_009995_3_3_9"/>
<dbReference type="Proteomes" id="UP000001131">
    <property type="component" value="Chromosome"/>
</dbReference>
<dbReference type="GO" id="GO:0005886">
    <property type="term" value="C:plasma membrane"/>
    <property type="evidence" value="ECO:0007669"/>
    <property type="project" value="UniProtKB-SubCell"/>
</dbReference>
<dbReference type="GO" id="GO:0005525">
    <property type="term" value="F:GTP binding"/>
    <property type="evidence" value="ECO:0007669"/>
    <property type="project" value="UniProtKB-UniRule"/>
</dbReference>
<dbReference type="GO" id="GO:0003924">
    <property type="term" value="F:GTPase activity"/>
    <property type="evidence" value="ECO:0007669"/>
    <property type="project" value="UniProtKB-UniRule"/>
</dbReference>
<dbReference type="GO" id="GO:0043022">
    <property type="term" value="F:ribosome binding"/>
    <property type="evidence" value="ECO:0007669"/>
    <property type="project" value="UniProtKB-UniRule"/>
</dbReference>
<dbReference type="GO" id="GO:0003746">
    <property type="term" value="F:translation elongation factor activity"/>
    <property type="evidence" value="ECO:0007669"/>
    <property type="project" value="UniProtKB-UniRule"/>
</dbReference>
<dbReference type="GO" id="GO:0045727">
    <property type="term" value="P:positive regulation of translation"/>
    <property type="evidence" value="ECO:0007669"/>
    <property type="project" value="UniProtKB-UniRule"/>
</dbReference>
<dbReference type="CDD" id="cd03699">
    <property type="entry name" value="EF4_II"/>
    <property type="match status" value="1"/>
</dbReference>
<dbReference type="CDD" id="cd16260">
    <property type="entry name" value="EF4_III"/>
    <property type="match status" value="1"/>
</dbReference>
<dbReference type="CDD" id="cd01890">
    <property type="entry name" value="LepA"/>
    <property type="match status" value="1"/>
</dbReference>
<dbReference type="CDD" id="cd03709">
    <property type="entry name" value="lepA_C"/>
    <property type="match status" value="1"/>
</dbReference>
<dbReference type="FunFam" id="3.40.50.300:FF:000078">
    <property type="entry name" value="Elongation factor 4"/>
    <property type="match status" value="1"/>
</dbReference>
<dbReference type="FunFam" id="2.40.30.10:FF:000015">
    <property type="entry name" value="Translation factor GUF1, mitochondrial"/>
    <property type="match status" value="1"/>
</dbReference>
<dbReference type="FunFam" id="3.30.70.240:FF:000007">
    <property type="entry name" value="Translation factor GUF1, mitochondrial"/>
    <property type="match status" value="1"/>
</dbReference>
<dbReference type="FunFam" id="3.30.70.2570:FF:000001">
    <property type="entry name" value="Translation factor GUF1, mitochondrial"/>
    <property type="match status" value="1"/>
</dbReference>
<dbReference type="FunFam" id="3.30.70.870:FF:000004">
    <property type="entry name" value="Translation factor GUF1, mitochondrial"/>
    <property type="match status" value="1"/>
</dbReference>
<dbReference type="Gene3D" id="3.30.70.240">
    <property type="match status" value="1"/>
</dbReference>
<dbReference type="Gene3D" id="3.30.70.2570">
    <property type="entry name" value="Elongation factor 4, C-terminal domain"/>
    <property type="match status" value="1"/>
</dbReference>
<dbReference type="Gene3D" id="3.30.70.870">
    <property type="entry name" value="Elongation Factor G (Translational Gtpase), domain 3"/>
    <property type="match status" value="1"/>
</dbReference>
<dbReference type="Gene3D" id="3.40.50.300">
    <property type="entry name" value="P-loop containing nucleotide triphosphate hydrolases"/>
    <property type="match status" value="1"/>
</dbReference>
<dbReference type="Gene3D" id="2.40.30.10">
    <property type="entry name" value="Translation factors"/>
    <property type="match status" value="1"/>
</dbReference>
<dbReference type="HAMAP" id="MF_00071">
    <property type="entry name" value="LepA"/>
    <property type="match status" value="1"/>
</dbReference>
<dbReference type="InterPro" id="IPR006297">
    <property type="entry name" value="EF-4"/>
</dbReference>
<dbReference type="InterPro" id="IPR035647">
    <property type="entry name" value="EFG_III/V"/>
</dbReference>
<dbReference type="InterPro" id="IPR000640">
    <property type="entry name" value="EFG_V-like"/>
</dbReference>
<dbReference type="InterPro" id="IPR004161">
    <property type="entry name" value="EFTu-like_2"/>
</dbReference>
<dbReference type="InterPro" id="IPR031157">
    <property type="entry name" value="G_TR_CS"/>
</dbReference>
<dbReference type="InterPro" id="IPR038363">
    <property type="entry name" value="LepA_C_sf"/>
</dbReference>
<dbReference type="InterPro" id="IPR013842">
    <property type="entry name" value="LepA_CTD"/>
</dbReference>
<dbReference type="InterPro" id="IPR035654">
    <property type="entry name" value="LepA_IV"/>
</dbReference>
<dbReference type="InterPro" id="IPR027417">
    <property type="entry name" value="P-loop_NTPase"/>
</dbReference>
<dbReference type="InterPro" id="IPR005225">
    <property type="entry name" value="Small_GTP-bd"/>
</dbReference>
<dbReference type="InterPro" id="IPR000795">
    <property type="entry name" value="T_Tr_GTP-bd_dom"/>
</dbReference>
<dbReference type="InterPro" id="IPR009000">
    <property type="entry name" value="Transl_B-barrel_sf"/>
</dbReference>
<dbReference type="NCBIfam" id="TIGR01393">
    <property type="entry name" value="lepA"/>
    <property type="match status" value="1"/>
</dbReference>
<dbReference type="NCBIfam" id="TIGR00231">
    <property type="entry name" value="small_GTP"/>
    <property type="match status" value="1"/>
</dbReference>
<dbReference type="PANTHER" id="PTHR43512:SF4">
    <property type="entry name" value="TRANSLATION FACTOR GUF1 HOMOLOG, CHLOROPLASTIC"/>
    <property type="match status" value="1"/>
</dbReference>
<dbReference type="PANTHER" id="PTHR43512">
    <property type="entry name" value="TRANSLATION FACTOR GUF1-RELATED"/>
    <property type="match status" value="1"/>
</dbReference>
<dbReference type="Pfam" id="PF00679">
    <property type="entry name" value="EFG_C"/>
    <property type="match status" value="1"/>
</dbReference>
<dbReference type="Pfam" id="PF00009">
    <property type="entry name" value="GTP_EFTU"/>
    <property type="match status" value="1"/>
</dbReference>
<dbReference type="Pfam" id="PF03144">
    <property type="entry name" value="GTP_EFTU_D2"/>
    <property type="match status" value="1"/>
</dbReference>
<dbReference type="Pfam" id="PF06421">
    <property type="entry name" value="LepA_C"/>
    <property type="match status" value="1"/>
</dbReference>
<dbReference type="PRINTS" id="PR00315">
    <property type="entry name" value="ELONGATNFCT"/>
</dbReference>
<dbReference type="SMART" id="SM00838">
    <property type="entry name" value="EFG_C"/>
    <property type="match status" value="1"/>
</dbReference>
<dbReference type="SUPFAM" id="SSF54980">
    <property type="entry name" value="EF-G C-terminal domain-like"/>
    <property type="match status" value="2"/>
</dbReference>
<dbReference type="SUPFAM" id="SSF52540">
    <property type="entry name" value="P-loop containing nucleoside triphosphate hydrolases"/>
    <property type="match status" value="1"/>
</dbReference>
<dbReference type="SUPFAM" id="SSF50447">
    <property type="entry name" value="Translation proteins"/>
    <property type="match status" value="1"/>
</dbReference>
<dbReference type="PROSITE" id="PS00301">
    <property type="entry name" value="G_TR_1"/>
    <property type="match status" value="1"/>
</dbReference>
<dbReference type="PROSITE" id="PS51722">
    <property type="entry name" value="G_TR_2"/>
    <property type="match status" value="1"/>
</dbReference>
<reference key="1">
    <citation type="journal article" date="2007" name="J. Bacteriol.">
        <title>Genome-wide transcriptional changes in Streptococcus gordonii in response to competence signaling peptide.</title>
        <authorList>
            <person name="Vickerman M.M."/>
            <person name="Iobst S."/>
            <person name="Jesionowski A.M."/>
            <person name="Gill S.R."/>
        </authorList>
    </citation>
    <scope>NUCLEOTIDE SEQUENCE [LARGE SCALE GENOMIC DNA]</scope>
    <source>
        <strain>Challis / ATCC 35105 / BCRC 15272 / CH1 / DL1 / V288</strain>
    </source>
</reference>
<gene>
    <name evidence="1" type="primary">lepA</name>
    <name type="ordered locus">SGO_0824</name>
</gene>